<dbReference type="EMBL" id="AJ544683">
    <property type="protein sequence ID" value="CAD67589.1"/>
    <property type="molecule type" value="Genomic_DNA"/>
</dbReference>
<dbReference type="RefSeq" id="WP_002986657.1">
    <property type="nucleotide sequence ID" value="NZ_WXZK01000002.1"/>
</dbReference>
<dbReference type="SMR" id="P0C0D5"/>
<dbReference type="STRING" id="1314.SD89_00380"/>
<dbReference type="GeneID" id="83689572"/>
<dbReference type="eggNOG" id="COG0088">
    <property type="taxonomic scope" value="Bacteria"/>
</dbReference>
<dbReference type="OMA" id="PQVHILE"/>
<dbReference type="OrthoDB" id="9803201at2"/>
<dbReference type="GO" id="GO:1990904">
    <property type="term" value="C:ribonucleoprotein complex"/>
    <property type="evidence" value="ECO:0007669"/>
    <property type="project" value="UniProtKB-KW"/>
</dbReference>
<dbReference type="GO" id="GO:0005840">
    <property type="term" value="C:ribosome"/>
    <property type="evidence" value="ECO:0007669"/>
    <property type="project" value="UniProtKB-KW"/>
</dbReference>
<dbReference type="GO" id="GO:0019843">
    <property type="term" value="F:rRNA binding"/>
    <property type="evidence" value="ECO:0007669"/>
    <property type="project" value="UniProtKB-UniRule"/>
</dbReference>
<dbReference type="GO" id="GO:0003735">
    <property type="term" value="F:structural constituent of ribosome"/>
    <property type="evidence" value="ECO:0007669"/>
    <property type="project" value="InterPro"/>
</dbReference>
<dbReference type="GO" id="GO:0046677">
    <property type="term" value="P:response to antibiotic"/>
    <property type="evidence" value="ECO:0007669"/>
    <property type="project" value="UniProtKB-KW"/>
</dbReference>
<dbReference type="GO" id="GO:0006412">
    <property type="term" value="P:translation"/>
    <property type="evidence" value="ECO:0007669"/>
    <property type="project" value="UniProtKB-UniRule"/>
</dbReference>
<dbReference type="FunFam" id="3.40.1370.10:FF:000003">
    <property type="entry name" value="50S ribosomal protein L4"/>
    <property type="match status" value="1"/>
</dbReference>
<dbReference type="Gene3D" id="3.40.1370.10">
    <property type="match status" value="1"/>
</dbReference>
<dbReference type="HAMAP" id="MF_01328_B">
    <property type="entry name" value="Ribosomal_uL4_B"/>
    <property type="match status" value="1"/>
</dbReference>
<dbReference type="InterPro" id="IPR002136">
    <property type="entry name" value="Ribosomal_uL4"/>
</dbReference>
<dbReference type="InterPro" id="IPR013005">
    <property type="entry name" value="Ribosomal_uL4-like"/>
</dbReference>
<dbReference type="InterPro" id="IPR023574">
    <property type="entry name" value="Ribosomal_uL4_dom_sf"/>
</dbReference>
<dbReference type="NCBIfam" id="TIGR03953">
    <property type="entry name" value="rplD_bact"/>
    <property type="match status" value="1"/>
</dbReference>
<dbReference type="PANTHER" id="PTHR10746">
    <property type="entry name" value="50S RIBOSOMAL PROTEIN L4"/>
    <property type="match status" value="1"/>
</dbReference>
<dbReference type="PANTHER" id="PTHR10746:SF6">
    <property type="entry name" value="LARGE RIBOSOMAL SUBUNIT PROTEIN UL4M"/>
    <property type="match status" value="1"/>
</dbReference>
<dbReference type="Pfam" id="PF00573">
    <property type="entry name" value="Ribosomal_L4"/>
    <property type="match status" value="1"/>
</dbReference>
<dbReference type="SUPFAM" id="SSF52166">
    <property type="entry name" value="Ribosomal protein L4"/>
    <property type="match status" value="1"/>
</dbReference>
<feature type="chain" id="PRO_0000129290" description="Large ribosomal subunit protein uL4">
    <location>
        <begin position="1"/>
        <end position="207"/>
    </location>
</feature>
<feature type="region of interest" description="Disordered" evidence="2">
    <location>
        <begin position="49"/>
        <end position="78"/>
    </location>
</feature>
<feature type="sequence variant" description="In strain: 11; confers resistance to erythromycin and azithromycin.">
    <location>
        <begin position="64"/>
        <end position="65"/>
    </location>
</feature>
<feature type="sequence variant" description="Confers resistance to azithromycin, erythromycin and clarithromycin." evidence="3">
    <location>
        <begin position="65"/>
        <end position="66"/>
    </location>
</feature>
<feature type="sequence variant" description="In strain: r791; highly resistant to azithromycin, erythromycin and clarithromycin, less so to spiramycin.">
    <original>GTG</original>
    <variation>TPS</variation>
    <location>
        <begin position="69"/>
        <end position="71"/>
    </location>
</feature>
<feature type="sequence variant" description="In strain: 390; confers resistance to erythromycin and azithromycin.">
    <location>
        <begin position="69"/>
        <end position="70"/>
    </location>
</feature>
<feature type="sequence variant" description="In strain: 237; resistant to azithromycin, erythromycin and spiramycin.">
    <original>G</original>
    <variation>GKG</variation>
    <location>
        <position position="69"/>
    </location>
</feature>
<feature type="sequence variant" description="In strain: 124; confers resistance to erythromycin and azithromycin.">
    <original>R</original>
    <variation>RTG</variation>
    <location>
        <position position="72"/>
    </location>
</feature>
<proteinExistence type="inferred from homology"/>
<keyword id="KW-0046">Antibiotic resistance</keyword>
<keyword id="KW-0687">Ribonucleoprotein</keyword>
<keyword id="KW-0689">Ribosomal protein</keyword>
<gene>
    <name type="primary">rplD</name>
</gene>
<organism>
    <name type="scientific">Streptococcus pyogenes</name>
    <dbReference type="NCBI Taxonomy" id="1314"/>
    <lineage>
        <taxon>Bacteria</taxon>
        <taxon>Bacillati</taxon>
        <taxon>Bacillota</taxon>
        <taxon>Bacilli</taxon>
        <taxon>Lactobacillales</taxon>
        <taxon>Streptococcaceae</taxon>
        <taxon>Streptococcus</taxon>
    </lineage>
</organism>
<comment type="function">
    <text evidence="1">One of the primary rRNA binding proteins, this protein initially binds near the 5'-end of the 23S rRNA. It is important during the early stages of 50S assembly. It makes multiple contacts with different domains of the 23S rRNA in the assembled 50S subunit and ribosome (By similarity).</text>
</comment>
<comment type="function">
    <text evidence="1">Forms part of the polypeptide exit tunnel.</text>
</comment>
<comment type="subunit">
    <text>Part of the 50S ribosomal subunit.</text>
</comment>
<comment type="similarity">
    <text evidence="4">Belongs to the universal ribosomal protein uL4 family.</text>
</comment>
<name>RL4_STRPY</name>
<protein>
    <recommendedName>
        <fullName evidence="4">Large ribosomal subunit protein uL4</fullName>
    </recommendedName>
    <alternativeName>
        <fullName>50S ribosomal protein L4</fullName>
    </alternativeName>
</protein>
<sequence length="207" mass="22125">MANVKLFDQTGKEVSSVELNDAIFGIEPNESVVFDVVISQRASLRQGTHAVKNRSAVSGGGRKPWRQKGTGRARQGSIRSPQWRGGGVVFGPTPRSYGYKLPQKVRRLALKSVYSAKVAEDKFVAVEGLSFAAPKTAEFAKVLSALSIDTKVLVLVEEGNEFAALSARNLPNVTVATAATASVLDIVNADKLLVTKEAISTIEEVLA</sequence>
<evidence type="ECO:0000250" key="1"/>
<evidence type="ECO:0000256" key="2">
    <source>
        <dbReference type="SAM" id="MobiDB-lite"/>
    </source>
</evidence>
<evidence type="ECO:0000269" key="3">
    <source>
    </source>
</evidence>
<evidence type="ECO:0000305" key="4"/>
<reference key="1">
    <citation type="journal article" date="2004" name="Ann. Clin. Microbiol. Antimicrob.">
        <title>Mutation at the position 2058 of the 23S rRNA as a cause of macrolide resistance in Streptococcus pyogenes.</title>
        <authorList>
            <person name="Jalava J.P."/>
            <person name="Vaara M."/>
            <person name="Huovinen P."/>
        </authorList>
    </citation>
    <scope>NUCLEOTIDE SEQUENCE [GENOMIC DNA]</scope>
    <source>
        <strain>ni4277</strain>
    </source>
</reference>
<reference key="2">
    <citation type="journal article" date="2002" name="Antimicrob. Agents Chemother.">
        <title>Ribosomal mutations in Streptococcus pneumoniae clinical isolates.</title>
        <authorList>
            <person name="Pihlajamaeki M."/>
            <person name="Kataja J."/>
            <person name="Seppaelae H."/>
            <person name="Elliot J."/>
            <person name="Leinonen M."/>
            <person name="Huovinen P."/>
            <person name="Jalava J."/>
        </authorList>
    </citation>
    <scope>MACROLIDE ANTIBIOTIC RESISTANT STRAIN</scope>
    <source>
        <strain>r791 / Serotype 19A</strain>
    </source>
</reference>
<reference key="3">
    <citation type="journal article" date="2002" name="J. Antimicrob. Chemother.">
        <title>Resistance to macrolides in clinical isolates of Streptococcus pyogenes due to ribosomal mutations.</title>
        <authorList>
            <person name="Malbruny B."/>
            <person name="Nagai K."/>
            <person name="Coquemont M."/>
            <person name="Bozdogan B."/>
            <person name="Andrasevic A.T."/>
            <person name="Hupkova H."/>
            <person name="Leclercq R."/>
            <person name="Appelbaum P.C."/>
        </authorList>
    </citation>
    <scope>MACROLIDE ANTIBIOTIC RESISTANT STRAIN</scope>
    <source>
        <strain>237</strain>
    </source>
</reference>
<reference key="4">
    <citation type="journal article" date="2002" name="Antimicrob. Agents Chemother.">
        <title>Emergence of group A streptococcus strains with different mechanisms of macrolide resistance.</title>
        <authorList>
            <person name="Bingen E."/>
            <person name="Leclercq R."/>
            <person name="Fitoussi F."/>
            <person name="Brahimi N."/>
            <person name="Malbruny B."/>
            <person name="Deforche D."/>
            <person name="Cohen R."/>
        </authorList>
    </citation>
    <scope>MACROLIDE ANTIBIOTIC RESISTANT STRAINS</scope>
    <source>
        <strain>11</strain>
        <strain>124</strain>
        <strain>390</strain>
    </source>
</reference>
<reference key="5">
    <citation type="journal article" date="2003" name="Clin. Microbiol. Infect.">
        <title>Development of macrolide resistance by ribosomal protein L4 mutation in Streptococcus pyogenes during miocamycin treatment of an eight-year-old Greek child with tonsillopharyngitis.</title>
        <authorList>
            <person name="Bozdogan B."/>
            <person name="Appelbaum P.C."/>
            <person name="Ednie L."/>
            <person name="Grivea I.N."/>
            <person name="Syrogiannopoulos G.A."/>
        </authorList>
    </citation>
    <scope>VARIANT MACROLIDE RESISTANT 65-TRP-ARG-66 DEL</scope>
</reference>
<accession>P0C0D5</accession>
<accession>P60830</accession>
<accession>Q9A1X3</accession>